<evidence type="ECO:0000255" key="1">
    <source>
        <dbReference type="HAMAP-Rule" id="MF_01347"/>
    </source>
</evidence>
<proteinExistence type="inferred from homology"/>
<gene>
    <name evidence="1" type="primary">atpD</name>
    <name type="ordered locus">Bpet0342</name>
</gene>
<dbReference type="EC" id="7.1.2.2" evidence="1"/>
<dbReference type="EMBL" id="AM902716">
    <property type="protein sequence ID" value="CAP40674.1"/>
    <property type="molecule type" value="Genomic_DNA"/>
</dbReference>
<dbReference type="SMR" id="A9HY42"/>
<dbReference type="STRING" id="94624.Bpet0342"/>
<dbReference type="KEGG" id="bpt:Bpet0342"/>
<dbReference type="eggNOG" id="COG0055">
    <property type="taxonomic scope" value="Bacteria"/>
</dbReference>
<dbReference type="Proteomes" id="UP000001225">
    <property type="component" value="Chromosome"/>
</dbReference>
<dbReference type="GO" id="GO:0005886">
    <property type="term" value="C:plasma membrane"/>
    <property type="evidence" value="ECO:0007669"/>
    <property type="project" value="UniProtKB-SubCell"/>
</dbReference>
<dbReference type="GO" id="GO:0045259">
    <property type="term" value="C:proton-transporting ATP synthase complex"/>
    <property type="evidence" value="ECO:0007669"/>
    <property type="project" value="UniProtKB-KW"/>
</dbReference>
<dbReference type="GO" id="GO:0005524">
    <property type="term" value="F:ATP binding"/>
    <property type="evidence" value="ECO:0007669"/>
    <property type="project" value="UniProtKB-UniRule"/>
</dbReference>
<dbReference type="GO" id="GO:0016887">
    <property type="term" value="F:ATP hydrolysis activity"/>
    <property type="evidence" value="ECO:0007669"/>
    <property type="project" value="InterPro"/>
</dbReference>
<dbReference type="GO" id="GO:0046933">
    <property type="term" value="F:proton-transporting ATP synthase activity, rotational mechanism"/>
    <property type="evidence" value="ECO:0007669"/>
    <property type="project" value="UniProtKB-UniRule"/>
</dbReference>
<dbReference type="CDD" id="cd18110">
    <property type="entry name" value="ATP-synt_F1_beta_C"/>
    <property type="match status" value="1"/>
</dbReference>
<dbReference type="CDD" id="cd18115">
    <property type="entry name" value="ATP-synt_F1_beta_N"/>
    <property type="match status" value="1"/>
</dbReference>
<dbReference type="CDD" id="cd01133">
    <property type="entry name" value="F1-ATPase_beta_CD"/>
    <property type="match status" value="1"/>
</dbReference>
<dbReference type="FunFam" id="1.10.1140.10:FF:000001">
    <property type="entry name" value="ATP synthase subunit beta"/>
    <property type="match status" value="1"/>
</dbReference>
<dbReference type="FunFam" id="3.40.50.300:FF:000004">
    <property type="entry name" value="ATP synthase subunit beta"/>
    <property type="match status" value="1"/>
</dbReference>
<dbReference type="Gene3D" id="2.40.10.170">
    <property type="match status" value="1"/>
</dbReference>
<dbReference type="Gene3D" id="1.10.1140.10">
    <property type="entry name" value="Bovine Mitochondrial F1-atpase, Atp Synthase Beta Chain, Chain D, domain 3"/>
    <property type="match status" value="1"/>
</dbReference>
<dbReference type="Gene3D" id="3.40.50.300">
    <property type="entry name" value="P-loop containing nucleotide triphosphate hydrolases"/>
    <property type="match status" value="1"/>
</dbReference>
<dbReference type="HAMAP" id="MF_01347">
    <property type="entry name" value="ATP_synth_beta_bact"/>
    <property type="match status" value="1"/>
</dbReference>
<dbReference type="InterPro" id="IPR003593">
    <property type="entry name" value="AAA+_ATPase"/>
</dbReference>
<dbReference type="InterPro" id="IPR055190">
    <property type="entry name" value="ATP-synt_VA_C"/>
</dbReference>
<dbReference type="InterPro" id="IPR005722">
    <property type="entry name" value="ATP_synth_F1_bsu"/>
</dbReference>
<dbReference type="InterPro" id="IPR020003">
    <property type="entry name" value="ATPase_a/bsu_AS"/>
</dbReference>
<dbReference type="InterPro" id="IPR050053">
    <property type="entry name" value="ATPase_alpha/beta_chains"/>
</dbReference>
<dbReference type="InterPro" id="IPR004100">
    <property type="entry name" value="ATPase_F1/V1/A1_a/bsu_N"/>
</dbReference>
<dbReference type="InterPro" id="IPR036121">
    <property type="entry name" value="ATPase_F1/V1/A1_a/bsu_N_sf"/>
</dbReference>
<dbReference type="InterPro" id="IPR000194">
    <property type="entry name" value="ATPase_F1/V1/A1_a/bsu_nucl-bd"/>
</dbReference>
<dbReference type="InterPro" id="IPR024034">
    <property type="entry name" value="ATPase_F1/V1_b/a_C"/>
</dbReference>
<dbReference type="InterPro" id="IPR027417">
    <property type="entry name" value="P-loop_NTPase"/>
</dbReference>
<dbReference type="NCBIfam" id="TIGR01039">
    <property type="entry name" value="atpD"/>
    <property type="match status" value="1"/>
</dbReference>
<dbReference type="PANTHER" id="PTHR15184">
    <property type="entry name" value="ATP SYNTHASE"/>
    <property type="match status" value="1"/>
</dbReference>
<dbReference type="PANTHER" id="PTHR15184:SF71">
    <property type="entry name" value="ATP SYNTHASE SUBUNIT BETA, MITOCHONDRIAL"/>
    <property type="match status" value="1"/>
</dbReference>
<dbReference type="Pfam" id="PF00006">
    <property type="entry name" value="ATP-synt_ab"/>
    <property type="match status" value="1"/>
</dbReference>
<dbReference type="Pfam" id="PF02874">
    <property type="entry name" value="ATP-synt_ab_N"/>
    <property type="match status" value="1"/>
</dbReference>
<dbReference type="Pfam" id="PF22919">
    <property type="entry name" value="ATP-synt_VA_C"/>
    <property type="match status" value="1"/>
</dbReference>
<dbReference type="SMART" id="SM00382">
    <property type="entry name" value="AAA"/>
    <property type="match status" value="1"/>
</dbReference>
<dbReference type="SUPFAM" id="SSF47917">
    <property type="entry name" value="C-terminal domain of alpha and beta subunits of F1 ATP synthase"/>
    <property type="match status" value="1"/>
</dbReference>
<dbReference type="SUPFAM" id="SSF50615">
    <property type="entry name" value="N-terminal domain of alpha and beta subunits of F1 ATP synthase"/>
    <property type="match status" value="1"/>
</dbReference>
<dbReference type="SUPFAM" id="SSF52540">
    <property type="entry name" value="P-loop containing nucleoside triphosphate hydrolases"/>
    <property type="match status" value="1"/>
</dbReference>
<dbReference type="PROSITE" id="PS00152">
    <property type="entry name" value="ATPASE_ALPHA_BETA"/>
    <property type="match status" value="1"/>
</dbReference>
<protein>
    <recommendedName>
        <fullName evidence="1">ATP synthase subunit beta</fullName>
        <ecNumber evidence="1">7.1.2.2</ecNumber>
    </recommendedName>
    <alternativeName>
        <fullName evidence="1">ATP synthase F1 sector subunit beta</fullName>
    </alternativeName>
    <alternativeName>
        <fullName evidence="1">F-ATPase subunit beta</fullName>
    </alternativeName>
</protein>
<reference key="1">
    <citation type="journal article" date="2008" name="BMC Genomics">
        <title>The missing link: Bordetella petrii is endowed with both the metabolic versatility of environmental bacteria and virulence traits of pathogenic Bordetellae.</title>
        <authorList>
            <person name="Gross R."/>
            <person name="Guzman C.A."/>
            <person name="Sebaihia M."/>
            <person name="Martin dos Santos V.A.P."/>
            <person name="Pieper D.H."/>
            <person name="Koebnik R."/>
            <person name="Lechner M."/>
            <person name="Bartels D."/>
            <person name="Buhrmester J."/>
            <person name="Choudhuri J.V."/>
            <person name="Ebensen T."/>
            <person name="Gaigalat L."/>
            <person name="Herrmann S."/>
            <person name="Khachane A.N."/>
            <person name="Larisch C."/>
            <person name="Link S."/>
            <person name="Linke B."/>
            <person name="Meyer F."/>
            <person name="Mormann S."/>
            <person name="Nakunst D."/>
            <person name="Rueckert C."/>
            <person name="Schneiker-Bekel S."/>
            <person name="Schulze K."/>
            <person name="Voerholter F.-J."/>
            <person name="Yevsa T."/>
            <person name="Engle J.T."/>
            <person name="Goldman W.E."/>
            <person name="Puehler A."/>
            <person name="Goebel U.B."/>
            <person name="Goesmann A."/>
            <person name="Bloecker H."/>
            <person name="Kaiser O."/>
            <person name="Martinez-Arias R."/>
        </authorList>
    </citation>
    <scope>NUCLEOTIDE SEQUENCE [LARGE SCALE GENOMIC DNA]</scope>
    <source>
        <strain>ATCC BAA-461 / DSM 12804 / CCUG 43448</strain>
    </source>
</reference>
<name>ATPB_BORPD</name>
<keyword id="KW-0066">ATP synthesis</keyword>
<keyword id="KW-0067">ATP-binding</keyword>
<keyword id="KW-0997">Cell inner membrane</keyword>
<keyword id="KW-1003">Cell membrane</keyword>
<keyword id="KW-0139">CF(1)</keyword>
<keyword id="KW-0375">Hydrogen ion transport</keyword>
<keyword id="KW-0406">Ion transport</keyword>
<keyword id="KW-0472">Membrane</keyword>
<keyword id="KW-0547">Nucleotide-binding</keyword>
<keyword id="KW-1278">Translocase</keyword>
<keyword id="KW-0813">Transport</keyword>
<accession>A9HY42</accession>
<feature type="chain" id="PRO_0000339480" description="ATP synthase subunit beta">
    <location>
        <begin position="1"/>
        <end position="466"/>
    </location>
</feature>
<feature type="binding site" evidence="1">
    <location>
        <begin position="155"/>
        <end position="162"/>
    </location>
    <ligand>
        <name>ATP</name>
        <dbReference type="ChEBI" id="CHEBI:30616"/>
    </ligand>
</feature>
<sequence length="466" mass="50605">MSNGTIVQCIGAVVDIQFPRDQMPKIYEALTLADDTSQFAEKGLTLEVQQQLGDGVVRTIALGSSDGLRRGMKVVGTGAPISVPVGHGTLGRIMDVLGRPIDEAGPIESDEKRAIHQTAPRFDELSPSVELLETGIKVIDLVCPFAKGGKVGLFGGAGVGKTVNMMELINNIAKQHSGLSVFAGVGERTREGNDFYHEMEESKVLDKVAMVFGQMNEPPGNRLRVALTGLTMAEKFRDEGRDILFFVDNIYRYTLAGTEVSALLGRMPSAVGYQPTLAEEMGVLQERITSTKTGSITSIQAVYVPADDLTDPSPATTFQHLDSTVVLSRDIAALGIYPAVDPLDSSSRQLDPQVVGEEHYAVARGVQQTLQRYKELRDIIAILGMDELSPDDKQAVARARKIQRFLSQPFHVAEVFTGSPGKYVPLAETIRGFKMIVDGECDALPEQAFYMVGTIDEAFEKAKKLQ</sequence>
<organism>
    <name type="scientific">Bordetella petrii (strain ATCC BAA-461 / DSM 12804 / CCUG 43448)</name>
    <dbReference type="NCBI Taxonomy" id="340100"/>
    <lineage>
        <taxon>Bacteria</taxon>
        <taxon>Pseudomonadati</taxon>
        <taxon>Pseudomonadota</taxon>
        <taxon>Betaproteobacteria</taxon>
        <taxon>Burkholderiales</taxon>
        <taxon>Alcaligenaceae</taxon>
        <taxon>Bordetella</taxon>
    </lineage>
</organism>
<comment type="function">
    <text evidence="1">Produces ATP from ADP in the presence of a proton gradient across the membrane. The catalytic sites are hosted primarily by the beta subunits.</text>
</comment>
<comment type="catalytic activity">
    <reaction evidence="1">
        <text>ATP + H2O + 4 H(+)(in) = ADP + phosphate + 5 H(+)(out)</text>
        <dbReference type="Rhea" id="RHEA:57720"/>
        <dbReference type="ChEBI" id="CHEBI:15377"/>
        <dbReference type="ChEBI" id="CHEBI:15378"/>
        <dbReference type="ChEBI" id="CHEBI:30616"/>
        <dbReference type="ChEBI" id="CHEBI:43474"/>
        <dbReference type="ChEBI" id="CHEBI:456216"/>
        <dbReference type="EC" id="7.1.2.2"/>
    </reaction>
</comment>
<comment type="subunit">
    <text evidence="1">F-type ATPases have 2 components, CF(1) - the catalytic core - and CF(0) - the membrane proton channel. CF(1) has five subunits: alpha(3), beta(3), gamma(1), delta(1), epsilon(1). CF(0) has three main subunits: a(1), b(2) and c(9-12). The alpha and beta chains form an alternating ring which encloses part of the gamma chain. CF(1) is attached to CF(0) by a central stalk formed by the gamma and epsilon chains, while a peripheral stalk is formed by the delta and b chains.</text>
</comment>
<comment type="subcellular location">
    <subcellularLocation>
        <location evidence="1">Cell inner membrane</location>
        <topology evidence="1">Peripheral membrane protein</topology>
    </subcellularLocation>
</comment>
<comment type="similarity">
    <text evidence="1">Belongs to the ATPase alpha/beta chains family.</text>
</comment>